<name>SYP_NOSP7</name>
<accession>B2J707</accession>
<protein>
    <recommendedName>
        <fullName evidence="1">Proline--tRNA ligase</fullName>
        <ecNumber evidence="1">6.1.1.15</ecNumber>
    </recommendedName>
    <alternativeName>
        <fullName evidence="1">Prolyl-tRNA synthetase</fullName>
        <shortName evidence="1">ProRS</shortName>
    </alternativeName>
</protein>
<evidence type="ECO:0000255" key="1">
    <source>
        <dbReference type="HAMAP-Rule" id="MF_01569"/>
    </source>
</evidence>
<gene>
    <name evidence="1" type="primary">proS</name>
    <name type="ordered locus">Npun_F0436</name>
</gene>
<reference key="1">
    <citation type="journal article" date="2013" name="Plant Physiol.">
        <title>A Nostoc punctiforme Sugar Transporter Necessary to Establish a Cyanobacterium-Plant Symbiosis.</title>
        <authorList>
            <person name="Ekman M."/>
            <person name="Picossi S."/>
            <person name="Campbell E.L."/>
            <person name="Meeks J.C."/>
            <person name="Flores E."/>
        </authorList>
    </citation>
    <scope>NUCLEOTIDE SEQUENCE [LARGE SCALE GENOMIC DNA]</scope>
    <source>
        <strain>ATCC 29133 / PCC 73102</strain>
    </source>
</reference>
<organism>
    <name type="scientific">Nostoc punctiforme (strain ATCC 29133 / PCC 73102)</name>
    <dbReference type="NCBI Taxonomy" id="63737"/>
    <lineage>
        <taxon>Bacteria</taxon>
        <taxon>Bacillati</taxon>
        <taxon>Cyanobacteriota</taxon>
        <taxon>Cyanophyceae</taxon>
        <taxon>Nostocales</taxon>
        <taxon>Nostocaceae</taxon>
        <taxon>Nostoc</taxon>
    </lineage>
</organism>
<dbReference type="EC" id="6.1.1.15" evidence="1"/>
<dbReference type="EMBL" id="CP001037">
    <property type="protein sequence ID" value="ACC79215.1"/>
    <property type="molecule type" value="Genomic_DNA"/>
</dbReference>
<dbReference type="RefSeq" id="WP_012407241.1">
    <property type="nucleotide sequence ID" value="NC_010628.1"/>
</dbReference>
<dbReference type="SMR" id="B2J707"/>
<dbReference type="STRING" id="63737.Npun_F0436"/>
<dbReference type="EnsemblBacteria" id="ACC79215">
    <property type="protein sequence ID" value="ACC79215"/>
    <property type="gene ID" value="Npun_F0436"/>
</dbReference>
<dbReference type="KEGG" id="npu:Npun_F0436"/>
<dbReference type="eggNOG" id="COG0442">
    <property type="taxonomic scope" value="Bacteria"/>
</dbReference>
<dbReference type="HOGENOM" id="CLU_016739_0_0_3"/>
<dbReference type="OrthoDB" id="9809052at2"/>
<dbReference type="PhylomeDB" id="B2J707"/>
<dbReference type="Proteomes" id="UP000001191">
    <property type="component" value="Chromosome"/>
</dbReference>
<dbReference type="GO" id="GO:0005829">
    <property type="term" value="C:cytosol"/>
    <property type="evidence" value="ECO:0007669"/>
    <property type="project" value="TreeGrafter"/>
</dbReference>
<dbReference type="GO" id="GO:0002161">
    <property type="term" value="F:aminoacyl-tRNA deacylase activity"/>
    <property type="evidence" value="ECO:0007669"/>
    <property type="project" value="InterPro"/>
</dbReference>
<dbReference type="GO" id="GO:0005524">
    <property type="term" value="F:ATP binding"/>
    <property type="evidence" value="ECO:0007669"/>
    <property type="project" value="UniProtKB-UniRule"/>
</dbReference>
<dbReference type="GO" id="GO:0004827">
    <property type="term" value="F:proline-tRNA ligase activity"/>
    <property type="evidence" value="ECO:0007669"/>
    <property type="project" value="UniProtKB-UniRule"/>
</dbReference>
<dbReference type="GO" id="GO:0006433">
    <property type="term" value="P:prolyl-tRNA aminoacylation"/>
    <property type="evidence" value="ECO:0007669"/>
    <property type="project" value="UniProtKB-UniRule"/>
</dbReference>
<dbReference type="CDD" id="cd04334">
    <property type="entry name" value="ProRS-INS"/>
    <property type="match status" value="1"/>
</dbReference>
<dbReference type="CDD" id="cd00861">
    <property type="entry name" value="ProRS_anticodon_short"/>
    <property type="match status" value="1"/>
</dbReference>
<dbReference type="CDD" id="cd00779">
    <property type="entry name" value="ProRS_core_prok"/>
    <property type="match status" value="1"/>
</dbReference>
<dbReference type="FunFam" id="3.30.930.10:FF:000167">
    <property type="entry name" value="Proline--tRNA ligase"/>
    <property type="match status" value="1"/>
</dbReference>
<dbReference type="FunFam" id="3.40.50.800:FF:000011">
    <property type="entry name" value="Proline--tRNA ligase"/>
    <property type="match status" value="1"/>
</dbReference>
<dbReference type="Gene3D" id="3.40.50.800">
    <property type="entry name" value="Anticodon-binding domain"/>
    <property type="match status" value="1"/>
</dbReference>
<dbReference type="Gene3D" id="3.30.930.10">
    <property type="entry name" value="Bira Bifunctional Protein, Domain 2"/>
    <property type="match status" value="2"/>
</dbReference>
<dbReference type="HAMAP" id="MF_01569">
    <property type="entry name" value="Pro_tRNA_synth_type1"/>
    <property type="match status" value="1"/>
</dbReference>
<dbReference type="InterPro" id="IPR002314">
    <property type="entry name" value="aa-tRNA-synt_IIb"/>
</dbReference>
<dbReference type="InterPro" id="IPR006195">
    <property type="entry name" value="aa-tRNA-synth_II"/>
</dbReference>
<dbReference type="InterPro" id="IPR045864">
    <property type="entry name" value="aa-tRNA-synth_II/BPL/LPL"/>
</dbReference>
<dbReference type="InterPro" id="IPR004154">
    <property type="entry name" value="Anticodon-bd"/>
</dbReference>
<dbReference type="InterPro" id="IPR036621">
    <property type="entry name" value="Anticodon-bd_dom_sf"/>
</dbReference>
<dbReference type="InterPro" id="IPR001387">
    <property type="entry name" value="Cro/C1-type_HTH"/>
</dbReference>
<dbReference type="InterPro" id="IPR002316">
    <property type="entry name" value="Pro-tRNA-ligase_IIa"/>
</dbReference>
<dbReference type="InterPro" id="IPR004500">
    <property type="entry name" value="Pro-tRNA-synth_IIa_bac-type"/>
</dbReference>
<dbReference type="InterPro" id="IPR023717">
    <property type="entry name" value="Pro-tRNA-Synthase_IIa_type1"/>
</dbReference>
<dbReference type="InterPro" id="IPR050062">
    <property type="entry name" value="Pro-tRNA_synthetase"/>
</dbReference>
<dbReference type="InterPro" id="IPR044140">
    <property type="entry name" value="ProRS_anticodon_short"/>
</dbReference>
<dbReference type="InterPro" id="IPR033730">
    <property type="entry name" value="ProRS_core_prok"/>
</dbReference>
<dbReference type="InterPro" id="IPR036754">
    <property type="entry name" value="YbaK/aa-tRNA-synt-asso_dom_sf"/>
</dbReference>
<dbReference type="InterPro" id="IPR007214">
    <property type="entry name" value="YbaK/aa-tRNA-synth-assoc-dom"/>
</dbReference>
<dbReference type="NCBIfam" id="NF006625">
    <property type="entry name" value="PRK09194.1"/>
    <property type="match status" value="1"/>
</dbReference>
<dbReference type="NCBIfam" id="TIGR00409">
    <property type="entry name" value="proS_fam_II"/>
    <property type="match status" value="1"/>
</dbReference>
<dbReference type="PANTHER" id="PTHR42753">
    <property type="entry name" value="MITOCHONDRIAL RIBOSOME PROTEIN L39/PROLYL-TRNA LIGASE FAMILY MEMBER"/>
    <property type="match status" value="1"/>
</dbReference>
<dbReference type="PANTHER" id="PTHR42753:SF2">
    <property type="entry name" value="PROLINE--TRNA LIGASE"/>
    <property type="match status" value="1"/>
</dbReference>
<dbReference type="Pfam" id="PF03129">
    <property type="entry name" value="HGTP_anticodon"/>
    <property type="match status" value="1"/>
</dbReference>
<dbReference type="Pfam" id="PF00587">
    <property type="entry name" value="tRNA-synt_2b"/>
    <property type="match status" value="1"/>
</dbReference>
<dbReference type="Pfam" id="PF04073">
    <property type="entry name" value="tRNA_edit"/>
    <property type="match status" value="1"/>
</dbReference>
<dbReference type="PRINTS" id="PR01046">
    <property type="entry name" value="TRNASYNTHPRO"/>
</dbReference>
<dbReference type="SUPFAM" id="SSF52954">
    <property type="entry name" value="Class II aaRS ABD-related"/>
    <property type="match status" value="1"/>
</dbReference>
<dbReference type="SUPFAM" id="SSF55681">
    <property type="entry name" value="Class II aaRS and biotin synthetases"/>
    <property type="match status" value="1"/>
</dbReference>
<dbReference type="SUPFAM" id="SSF55826">
    <property type="entry name" value="YbaK/ProRS associated domain"/>
    <property type="match status" value="1"/>
</dbReference>
<dbReference type="PROSITE" id="PS50862">
    <property type="entry name" value="AA_TRNA_LIGASE_II"/>
    <property type="match status" value="1"/>
</dbReference>
<keyword id="KW-0030">Aminoacyl-tRNA synthetase</keyword>
<keyword id="KW-0067">ATP-binding</keyword>
<keyword id="KW-0963">Cytoplasm</keyword>
<keyword id="KW-0436">Ligase</keyword>
<keyword id="KW-0547">Nucleotide-binding</keyword>
<keyword id="KW-0648">Protein biosynthesis</keyword>
<keyword id="KW-1185">Reference proteome</keyword>
<proteinExistence type="inferred from homology"/>
<sequence>MRLSQMLFVTLRDDPADAEIPSHKLLLRAGYIRRIGSGLYAYLPLMWRVLQKVSQIVREEMNATGAQECLLPQLQPADLWKESGRWDTYTKAEGIMFSLIDRREQQLGLGPTHEEVITAIARDMIRSYRQLPLHLYQIQTKFRDEIRPRFGLMRGREFIMKDGYSFHTDEASLKETYQDMYKAYSNILRRSGLAFRAVEADSGAIGGSGSTEFMILAEAGEDEVLYTEDGKYAANVEKAVSLPIDAETSRFTTYEKRDTPGTETIEKVCQLLNCSPTQLVKNVLYQTVYDNGKTVLVLVSIRGDQEVNEVKLQNELTKLASEYGAKTIISLNVPNVEAQQAWTTKSLPLGYIAPDIADEYIAANKQIHSKFLRLVDQTAVDLKNFVTGANEAGYHVVSANWDEQFKLPERVVDIRKSRPGDRAIHNPEQTLQSARGIEAGHIFQLGTKYSQAMGATYTNEQGEEKPLLMGCFGVGVSRLAQAAVEQSYDNDGIIWPVAIAPYHAIVTIPNIKDAQQVEVAQKLYTELNQAGIETLLDDRDERAGVKFKDADLIGIPYRIVTGRAIANGKVEVVERATRKSQEIVIDEVTTTLQQWITAAIDVKN</sequence>
<comment type="function">
    <text evidence="1">Catalyzes the attachment of proline to tRNA(Pro) in a two-step reaction: proline is first activated by ATP to form Pro-AMP and then transferred to the acceptor end of tRNA(Pro). As ProRS can inadvertently accommodate and process non-cognate amino acids such as alanine and cysteine, to avoid such errors it has two additional distinct editing activities against alanine. One activity is designated as 'pretransfer' editing and involves the tRNA(Pro)-independent hydrolysis of activated Ala-AMP. The other activity is designated 'posttransfer' editing and involves deacylation of mischarged Ala-tRNA(Pro). The misacylated Cys-tRNA(Pro) is not edited by ProRS.</text>
</comment>
<comment type="catalytic activity">
    <reaction evidence="1">
        <text>tRNA(Pro) + L-proline + ATP = L-prolyl-tRNA(Pro) + AMP + diphosphate</text>
        <dbReference type="Rhea" id="RHEA:14305"/>
        <dbReference type="Rhea" id="RHEA-COMP:9700"/>
        <dbReference type="Rhea" id="RHEA-COMP:9702"/>
        <dbReference type="ChEBI" id="CHEBI:30616"/>
        <dbReference type="ChEBI" id="CHEBI:33019"/>
        <dbReference type="ChEBI" id="CHEBI:60039"/>
        <dbReference type="ChEBI" id="CHEBI:78442"/>
        <dbReference type="ChEBI" id="CHEBI:78532"/>
        <dbReference type="ChEBI" id="CHEBI:456215"/>
        <dbReference type="EC" id="6.1.1.15"/>
    </reaction>
</comment>
<comment type="subunit">
    <text evidence="1">Homodimer.</text>
</comment>
<comment type="subcellular location">
    <subcellularLocation>
        <location evidence="1">Cytoplasm</location>
    </subcellularLocation>
</comment>
<comment type="domain">
    <text evidence="1">Consists of three domains: the N-terminal catalytic domain, the editing domain and the C-terminal anticodon-binding domain.</text>
</comment>
<comment type="similarity">
    <text evidence="1">Belongs to the class-II aminoacyl-tRNA synthetase family. ProS type 1 subfamily.</text>
</comment>
<feature type="chain" id="PRO_1000199407" description="Proline--tRNA ligase">
    <location>
        <begin position="1"/>
        <end position="604"/>
    </location>
</feature>